<gene>
    <name evidence="1" type="primary">ilvC</name>
    <name type="ordered locus">Mpop_0361</name>
</gene>
<organism>
    <name type="scientific">Methylorubrum populi (strain ATCC BAA-705 / NCIMB 13946 / BJ001)</name>
    <name type="common">Methylobacterium populi</name>
    <dbReference type="NCBI Taxonomy" id="441620"/>
    <lineage>
        <taxon>Bacteria</taxon>
        <taxon>Pseudomonadati</taxon>
        <taxon>Pseudomonadota</taxon>
        <taxon>Alphaproteobacteria</taxon>
        <taxon>Hyphomicrobiales</taxon>
        <taxon>Methylobacteriaceae</taxon>
        <taxon>Methylorubrum</taxon>
    </lineage>
</organism>
<feature type="chain" id="PRO_1000124309" description="Ketol-acid reductoisomerase (NADP(+))">
    <location>
        <begin position="1"/>
        <end position="339"/>
    </location>
</feature>
<feature type="domain" description="KARI N-terminal Rossmann" evidence="2">
    <location>
        <begin position="1"/>
        <end position="182"/>
    </location>
</feature>
<feature type="domain" description="KARI C-terminal knotted" evidence="3">
    <location>
        <begin position="183"/>
        <end position="328"/>
    </location>
</feature>
<feature type="active site" evidence="1">
    <location>
        <position position="108"/>
    </location>
</feature>
<feature type="binding site" evidence="1">
    <location>
        <begin position="24"/>
        <end position="27"/>
    </location>
    <ligand>
        <name>NADP(+)</name>
        <dbReference type="ChEBI" id="CHEBI:58349"/>
    </ligand>
</feature>
<feature type="binding site" evidence="1">
    <location>
        <position position="48"/>
    </location>
    <ligand>
        <name>NADP(+)</name>
        <dbReference type="ChEBI" id="CHEBI:58349"/>
    </ligand>
</feature>
<feature type="binding site" evidence="1">
    <location>
        <position position="51"/>
    </location>
    <ligand>
        <name>NADP(+)</name>
        <dbReference type="ChEBI" id="CHEBI:58349"/>
    </ligand>
</feature>
<feature type="binding site" evidence="1">
    <location>
        <position position="53"/>
    </location>
    <ligand>
        <name>NADP(+)</name>
        <dbReference type="ChEBI" id="CHEBI:58349"/>
    </ligand>
</feature>
<feature type="binding site" evidence="1">
    <location>
        <begin position="83"/>
        <end position="86"/>
    </location>
    <ligand>
        <name>NADP(+)</name>
        <dbReference type="ChEBI" id="CHEBI:58349"/>
    </ligand>
</feature>
<feature type="binding site" evidence="1">
    <location>
        <position position="134"/>
    </location>
    <ligand>
        <name>NADP(+)</name>
        <dbReference type="ChEBI" id="CHEBI:58349"/>
    </ligand>
</feature>
<feature type="binding site" evidence="1">
    <location>
        <position position="191"/>
    </location>
    <ligand>
        <name>Mg(2+)</name>
        <dbReference type="ChEBI" id="CHEBI:18420"/>
        <label>1</label>
    </ligand>
</feature>
<feature type="binding site" evidence="1">
    <location>
        <position position="191"/>
    </location>
    <ligand>
        <name>Mg(2+)</name>
        <dbReference type="ChEBI" id="CHEBI:18420"/>
        <label>2</label>
    </ligand>
</feature>
<feature type="binding site" evidence="1">
    <location>
        <position position="195"/>
    </location>
    <ligand>
        <name>Mg(2+)</name>
        <dbReference type="ChEBI" id="CHEBI:18420"/>
        <label>1</label>
    </ligand>
</feature>
<feature type="binding site" evidence="1">
    <location>
        <position position="227"/>
    </location>
    <ligand>
        <name>Mg(2+)</name>
        <dbReference type="ChEBI" id="CHEBI:18420"/>
        <label>2</label>
    </ligand>
</feature>
<feature type="binding site" evidence="1">
    <location>
        <position position="231"/>
    </location>
    <ligand>
        <name>Mg(2+)</name>
        <dbReference type="ChEBI" id="CHEBI:18420"/>
        <label>2</label>
    </ligand>
</feature>
<feature type="binding site" evidence="1">
    <location>
        <position position="252"/>
    </location>
    <ligand>
        <name>substrate</name>
    </ligand>
</feature>
<reference key="1">
    <citation type="submission" date="2008-04" db="EMBL/GenBank/DDBJ databases">
        <title>Complete sequence of chromosome of Methylobacterium populi BJ001.</title>
        <authorList>
            <consortium name="US DOE Joint Genome Institute"/>
            <person name="Copeland A."/>
            <person name="Lucas S."/>
            <person name="Lapidus A."/>
            <person name="Glavina del Rio T."/>
            <person name="Dalin E."/>
            <person name="Tice H."/>
            <person name="Bruce D."/>
            <person name="Goodwin L."/>
            <person name="Pitluck S."/>
            <person name="Chertkov O."/>
            <person name="Brettin T."/>
            <person name="Detter J.C."/>
            <person name="Han C."/>
            <person name="Kuske C.R."/>
            <person name="Schmutz J."/>
            <person name="Larimer F."/>
            <person name="Land M."/>
            <person name="Hauser L."/>
            <person name="Kyrpides N."/>
            <person name="Mikhailova N."/>
            <person name="Marx C."/>
            <person name="Richardson P."/>
        </authorList>
    </citation>
    <scope>NUCLEOTIDE SEQUENCE [LARGE SCALE GENOMIC DNA]</scope>
    <source>
        <strain>ATCC BAA-705 / NCIMB 13946 / BJ001</strain>
    </source>
</reference>
<keyword id="KW-0028">Amino-acid biosynthesis</keyword>
<keyword id="KW-0100">Branched-chain amino acid biosynthesis</keyword>
<keyword id="KW-0460">Magnesium</keyword>
<keyword id="KW-0479">Metal-binding</keyword>
<keyword id="KW-0521">NADP</keyword>
<keyword id="KW-0560">Oxidoreductase</keyword>
<accession>B1ZI53</accession>
<name>ILVC_METPB</name>
<sequence>MRVYYDRDADLNLIKGKKVVIVGYGSQGHAHALNLRDSGVKDIVIALREGSATAKKAEHEGFKVMNVADAAKWGDVVMMLTPDELQGDIYKESLEGNMKQGAALLFAHGLNVHFNLIEPRKDLDVLMVAPKGPGHTVRGEYLKGGGVPTLIAIAQDASGNAHDLGLSYASANGGGRAGIIETTFKEECETDLFGEQAVLCGGLVELIKAGFETLVEAGYAPEMAYFECLHEVKLIVDLIYEGGIANMNYSISNTAEYGEYVTGPRIVTPETKAEMKRVLNDIQSGIFTRNWMLENKVGQTSFKATRAKLAAHPIEEVGAKLRGMMPWISEKALVDKTKN</sequence>
<protein>
    <recommendedName>
        <fullName evidence="1">Ketol-acid reductoisomerase (NADP(+))</fullName>
        <shortName evidence="1">KARI</shortName>
        <ecNumber evidence="1">1.1.1.86</ecNumber>
    </recommendedName>
    <alternativeName>
        <fullName evidence="1">Acetohydroxy-acid isomeroreductase</fullName>
        <shortName evidence="1">AHIR</shortName>
    </alternativeName>
    <alternativeName>
        <fullName evidence="1">Alpha-keto-beta-hydroxylacyl reductoisomerase</fullName>
    </alternativeName>
    <alternativeName>
        <fullName evidence="1">Ketol-acid reductoisomerase type 1</fullName>
    </alternativeName>
    <alternativeName>
        <fullName evidence="1">Ketol-acid reductoisomerase type I</fullName>
    </alternativeName>
</protein>
<evidence type="ECO:0000255" key="1">
    <source>
        <dbReference type="HAMAP-Rule" id="MF_00435"/>
    </source>
</evidence>
<evidence type="ECO:0000255" key="2">
    <source>
        <dbReference type="PROSITE-ProRule" id="PRU01197"/>
    </source>
</evidence>
<evidence type="ECO:0000255" key="3">
    <source>
        <dbReference type="PROSITE-ProRule" id="PRU01198"/>
    </source>
</evidence>
<dbReference type="EC" id="1.1.1.86" evidence="1"/>
<dbReference type="EMBL" id="CP001029">
    <property type="protein sequence ID" value="ACB78539.1"/>
    <property type="molecule type" value="Genomic_DNA"/>
</dbReference>
<dbReference type="SMR" id="B1ZI53"/>
<dbReference type="STRING" id="441620.Mpop_0361"/>
<dbReference type="KEGG" id="mpo:Mpop_0361"/>
<dbReference type="eggNOG" id="COG0059">
    <property type="taxonomic scope" value="Bacteria"/>
</dbReference>
<dbReference type="HOGENOM" id="CLU_033821_0_1_5"/>
<dbReference type="OrthoDB" id="9804088at2"/>
<dbReference type="UniPathway" id="UPA00047">
    <property type="reaction ID" value="UER00056"/>
</dbReference>
<dbReference type="UniPathway" id="UPA00049">
    <property type="reaction ID" value="UER00060"/>
</dbReference>
<dbReference type="Proteomes" id="UP000007136">
    <property type="component" value="Chromosome"/>
</dbReference>
<dbReference type="GO" id="GO:0005829">
    <property type="term" value="C:cytosol"/>
    <property type="evidence" value="ECO:0007669"/>
    <property type="project" value="TreeGrafter"/>
</dbReference>
<dbReference type="GO" id="GO:0004455">
    <property type="term" value="F:ketol-acid reductoisomerase activity"/>
    <property type="evidence" value="ECO:0007669"/>
    <property type="project" value="UniProtKB-UniRule"/>
</dbReference>
<dbReference type="GO" id="GO:0000287">
    <property type="term" value="F:magnesium ion binding"/>
    <property type="evidence" value="ECO:0007669"/>
    <property type="project" value="UniProtKB-UniRule"/>
</dbReference>
<dbReference type="GO" id="GO:0050661">
    <property type="term" value="F:NADP binding"/>
    <property type="evidence" value="ECO:0007669"/>
    <property type="project" value="InterPro"/>
</dbReference>
<dbReference type="GO" id="GO:0009097">
    <property type="term" value="P:isoleucine biosynthetic process"/>
    <property type="evidence" value="ECO:0007669"/>
    <property type="project" value="UniProtKB-UniRule"/>
</dbReference>
<dbReference type="GO" id="GO:0009099">
    <property type="term" value="P:L-valine biosynthetic process"/>
    <property type="evidence" value="ECO:0007669"/>
    <property type="project" value="UniProtKB-UniRule"/>
</dbReference>
<dbReference type="FunFam" id="3.40.50.720:FF:000023">
    <property type="entry name" value="Ketol-acid reductoisomerase (NADP(+))"/>
    <property type="match status" value="1"/>
</dbReference>
<dbReference type="Gene3D" id="6.10.240.10">
    <property type="match status" value="1"/>
</dbReference>
<dbReference type="Gene3D" id="3.40.50.720">
    <property type="entry name" value="NAD(P)-binding Rossmann-like Domain"/>
    <property type="match status" value="1"/>
</dbReference>
<dbReference type="HAMAP" id="MF_00435">
    <property type="entry name" value="IlvC"/>
    <property type="match status" value="1"/>
</dbReference>
<dbReference type="InterPro" id="IPR008927">
    <property type="entry name" value="6-PGluconate_DH-like_C_sf"/>
</dbReference>
<dbReference type="InterPro" id="IPR013023">
    <property type="entry name" value="KARI"/>
</dbReference>
<dbReference type="InterPro" id="IPR000506">
    <property type="entry name" value="KARI_C"/>
</dbReference>
<dbReference type="InterPro" id="IPR013116">
    <property type="entry name" value="KARI_N"/>
</dbReference>
<dbReference type="InterPro" id="IPR014359">
    <property type="entry name" value="KARI_prok"/>
</dbReference>
<dbReference type="InterPro" id="IPR036291">
    <property type="entry name" value="NAD(P)-bd_dom_sf"/>
</dbReference>
<dbReference type="NCBIfam" id="TIGR00465">
    <property type="entry name" value="ilvC"/>
    <property type="match status" value="1"/>
</dbReference>
<dbReference type="NCBIfam" id="NF004017">
    <property type="entry name" value="PRK05479.1"/>
    <property type="match status" value="1"/>
</dbReference>
<dbReference type="NCBIfam" id="NF009940">
    <property type="entry name" value="PRK13403.1"/>
    <property type="match status" value="1"/>
</dbReference>
<dbReference type="PANTHER" id="PTHR21371">
    <property type="entry name" value="KETOL-ACID REDUCTOISOMERASE, MITOCHONDRIAL"/>
    <property type="match status" value="1"/>
</dbReference>
<dbReference type="PANTHER" id="PTHR21371:SF1">
    <property type="entry name" value="KETOL-ACID REDUCTOISOMERASE, MITOCHONDRIAL"/>
    <property type="match status" value="1"/>
</dbReference>
<dbReference type="Pfam" id="PF01450">
    <property type="entry name" value="KARI_C"/>
    <property type="match status" value="1"/>
</dbReference>
<dbReference type="Pfam" id="PF07991">
    <property type="entry name" value="KARI_N"/>
    <property type="match status" value="1"/>
</dbReference>
<dbReference type="PIRSF" id="PIRSF000116">
    <property type="entry name" value="IlvC_gammaproteo"/>
    <property type="match status" value="1"/>
</dbReference>
<dbReference type="SUPFAM" id="SSF48179">
    <property type="entry name" value="6-phosphogluconate dehydrogenase C-terminal domain-like"/>
    <property type="match status" value="1"/>
</dbReference>
<dbReference type="SUPFAM" id="SSF51735">
    <property type="entry name" value="NAD(P)-binding Rossmann-fold domains"/>
    <property type="match status" value="1"/>
</dbReference>
<dbReference type="PROSITE" id="PS51851">
    <property type="entry name" value="KARI_C"/>
    <property type="match status" value="1"/>
</dbReference>
<dbReference type="PROSITE" id="PS51850">
    <property type="entry name" value="KARI_N"/>
    <property type="match status" value="1"/>
</dbReference>
<proteinExistence type="inferred from homology"/>
<comment type="function">
    <text evidence="1">Involved in the biosynthesis of branched-chain amino acids (BCAA). Catalyzes an alkyl-migration followed by a ketol-acid reduction of (S)-2-acetolactate (S2AL) to yield (R)-2,3-dihydroxy-isovalerate. In the isomerase reaction, S2AL is rearranged via a Mg-dependent methyl migration to produce 3-hydroxy-3-methyl-2-ketobutyrate (HMKB). In the reductase reaction, this 2-ketoacid undergoes a metal-dependent reduction by NADPH to yield (R)-2,3-dihydroxy-isovalerate.</text>
</comment>
<comment type="catalytic activity">
    <reaction evidence="1">
        <text>(2R)-2,3-dihydroxy-3-methylbutanoate + NADP(+) = (2S)-2-acetolactate + NADPH + H(+)</text>
        <dbReference type="Rhea" id="RHEA:22068"/>
        <dbReference type="ChEBI" id="CHEBI:15378"/>
        <dbReference type="ChEBI" id="CHEBI:49072"/>
        <dbReference type="ChEBI" id="CHEBI:57783"/>
        <dbReference type="ChEBI" id="CHEBI:58349"/>
        <dbReference type="ChEBI" id="CHEBI:58476"/>
        <dbReference type="EC" id="1.1.1.86"/>
    </reaction>
</comment>
<comment type="catalytic activity">
    <reaction evidence="1">
        <text>(2R,3R)-2,3-dihydroxy-3-methylpentanoate + NADP(+) = (S)-2-ethyl-2-hydroxy-3-oxobutanoate + NADPH + H(+)</text>
        <dbReference type="Rhea" id="RHEA:13493"/>
        <dbReference type="ChEBI" id="CHEBI:15378"/>
        <dbReference type="ChEBI" id="CHEBI:49256"/>
        <dbReference type="ChEBI" id="CHEBI:49258"/>
        <dbReference type="ChEBI" id="CHEBI:57783"/>
        <dbReference type="ChEBI" id="CHEBI:58349"/>
        <dbReference type="EC" id="1.1.1.86"/>
    </reaction>
</comment>
<comment type="cofactor">
    <cofactor evidence="1">
        <name>Mg(2+)</name>
        <dbReference type="ChEBI" id="CHEBI:18420"/>
    </cofactor>
    <text evidence="1">Binds 2 magnesium ions per subunit.</text>
</comment>
<comment type="pathway">
    <text evidence="1">Amino-acid biosynthesis; L-isoleucine biosynthesis; L-isoleucine from 2-oxobutanoate: step 2/4.</text>
</comment>
<comment type="pathway">
    <text evidence="1">Amino-acid biosynthesis; L-valine biosynthesis; L-valine from pyruvate: step 2/4.</text>
</comment>
<comment type="similarity">
    <text evidence="1">Belongs to the ketol-acid reductoisomerase family.</text>
</comment>